<proteinExistence type="inferred from homology"/>
<gene>
    <name evidence="1" type="primary">trpC</name>
    <name type="ordered locus">C8J_0460</name>
</gene>
<name>TRPC_CAMJ8</name>
<feature type="chain" id="PRO_1000071433" description="Indole-3-glycerol phosphate synthase">
    <location>
        <begin position="1"/>
        <end position="258"/>
    </location>
</feature>
<protein>
    <recommendedName>
        <fullName evidence="1">Indole-3-glycerol phosphate synthase</fullName>
        <shortName evidence="1">IGPS</shortName>
        <ecNumber evidence="1">4.1.1.48</ecNumber>
    </recommendedName>
</protein>
<sequence length="258" mass="29573">MILDKIFEKTKEDLKERKLKLPYDMLGRSLASNPFFPKDVIKALKRVEKEVKIIAEVKKASPSKGVIREDFDPLSIALNYEKNKAAAISVLTEPHFFKGSLEYLSLIRRYTQIPLLRKDFIFDEYQILEALVYGADFVLLIAKMLSMKELKKLLEFARHLGLEALVEIHDKEDLSKAIFAGADIIGINHRNLEDFTMDMSLCEKLIPQIPNSKIIIAESGLENKEFLEHLQNLGVDAFLIGEYFMREKDEGKALKALL</sequence>
<reference key="1">
    <citation type="journal article" date="2007" name="J. Bacteriol.">
        <title>The complete genome sequence of Campylobacter jejuni strain 81116 (NCTC11828).</title>
        <authorList>
            <person name="Pearson B.M."/>
            <person name="Gaskin D.J.H."/>
            <person name="Segers R.P.A.M."/>
            <person name="Wells J.M."/>
            <person name="Nuijten P.J.M."/>
            <person name="van Vliet A.H.M."/>
        </authorList>
    </citation>
    <scope>NUCLEOTIDE SEQUENCE [LARGE SCALE GENOMIC DNA]</scope>
    <source>
        <strain>81116 / NCTC 11828</strain>
    </source>
</reference>
<dbReference type="EC" id="4.1.1.48" evidence="1"/>
<dbReference type="EMBL" id="CP000814">
    <property type="protein sequence ID" value="ABV52059.1"/>
    <property type="molecule type" value="Genomic_DNA"/>
</dbReference>
<dbReference type="RefSeq" id="WP_002854779.1">
    <property type="nucleotide sequence ID" value="NC_009839.1"/>
</dbReference>
<dbReference type="SMR" id="A8FKS2"/>
<dbReference type="KEGG" id="cju:C8J_0460"/>
<dbReference type="HOGENOM" id="CLU_034247_2_0_7"/>
<dbReference type="UniPathway" id="UPA00035">
    <property type="reaction ID" value="UER00043"/>
</dbReference>
<dbReference type="GO" id="GO:0004425">
    <property type="term" value="F:indole-3-glycerol-phosphate synthase activity"/>
    <property type="evidence" value="ECO:0007669"/>
    <property type="project" value="UniProtKB-UniRule"/>
</dbReference>
<dbReference type="GO" id="GO:0004640">
    <property type="term" value="F:phosphoribosylanthranilate isomerase activity"/>
    <property type="evidence" value="ECO:0007669"/>
    <property type="project" value="TreeGrafter"/>
</dbReference>
<dbReference type="GO" id="GO:0000162">
    <property type="term" value="P:L-tryptophan biosynthetic process"/>
    <property type="evidence" value="ECO:0007669"/>
    <property type="project" value="UniProtKB-UniRule"/>
</dbReference>
<dbReference type="CDD" id="cd00331">
    <property type="entry name" value="IGPS"/>
    <property type="match status" value="1"/>
</dbReference>
<dbReference type="FunFam" id="3.20.20.70:FF:000024">
    <property type="entry name" value="Indole-3-glycerol phosphate synthase"/>
    <property type="match status" value="1"/>
</dbReference>
<dbReference type="Gene3D" id="3.20.20.70">
    <property type="entry name" value="Aldolase class I"/>
    <property type="match status" value="1"/>
</dbReference>
<dbReference type="HAMAP" id="MF_00134_A">
    <property type="entry name" value="IGPS_A"/>
    <property type="match status" value="1"/>
</dbReference>
<dbReference type="HAMAP" id="MF_00134_B">
    <property type="entry name" value="IGPS_B"/>
    <property type="match status" value="1"/>
</dbReference>
<dbReference type="InterPro" id="IPR013785">
    <property type="entry name" value="Aldolase_TIM"/>
</dbReference>
<dbReference type="InterPro" id="IPR045186">
    <property type="entry name" value="Indole-3-glycerol_P_synth"/>
</dbReference>
<dbReference type="InterPro" id="IPR013798">
    <property type="entry name" value="Indole-3-glycerol_P_synth_dom"/>
</dbReference>
<dbReference type="InterPro" id="IPR001468">
    <property type="entry name" value="Indole-3-GlycerolPSynthase_CS"/>
</dbReference>
<dbReference type="InterPro" id="IPR011060">
    <property type="entry name" value="RibuloseP-bd_barrel"/>
</dbReference>
<dbReference type="NCBIfam" id="NF001377">
    <property type="entry name" value="PRK00278.2-4"/>
    <property type="match status" value="1"/>
</dbReference>
<dbReference type="NCBIfam" id="NF001378">
    <property type="entry name" value="PRK00278.2-5"/>
    <property type="match status" value="1"/>
</dbReference>
<dbReference type="PANTHER" id="PTHR22854:SF2">
    <property type="entry name" value="INDOLE-3-GLYCEROL-PHOSPHATE SYNTHASE"/>
    <property type="match status" value="1"/>
</dbReference>
<dbReference type="PANTHER" id="PTHR22854">
    <property type="entry name" value="TRYPTOPHAN BIOSYNTHESIS PROTEIN"/>
    <property type="match status" value="1"/>
</dbReference>
<dbReference type="Pfam" id="PF00218">
    <property type="entry name" value="IGPS"/>
    <property type="match status" value="1"/>
</dbReference>
<dbReference type="SUPFAM" id="SSF51366">
    <property type="entry name" value="Ribulose-phoshate binding barrel"/>
    <property type="match status" value="1"/>
</dbReference>
<dbReference type="PROSITE" id="PS00614">
    <property type="entry name" value="IGPS"/>
    <property type="match status" value="1"/>
</dbReference>
<organism>
    <name type="scientific">Campylobacter jejuni subsp. jejuni serotype O:6 (strain 81116 / NCTC 11828)</name>
    <dbReference type="NCBI Taxonomy" id="407148"/>
    <lineage>
        <taxon>Bacteria</taxon>
        <taxon>Pseudomonadati</taxon>
        <taxon>Campylobacterota</taxon>
        <taxon>Epsilonproteobacteria</taxon>
        <taxon>Campylobacterales</taxon>
        <taxon>Campylobacteraceae</taxon>
        <taxon>Campylobacter</taxon>
    </lineage>
</organism>
<accession>A8FKS2</accession>
<evidence type="ECO:0000255" key="1">
    <source>
        <dbReference type="HAMAP-Rule" id="MF_00134"/>
    </source>
</evidence>
<keyword id="KW-0028">Amino-acid biosynthesis</keyword>
<keyword id="KW-0057">Aromatic amino acid biosynthesis</keyword>
<keyword id="KW-0210">Decarboxylase</keyword>
<keyword id="KW-0456">Lyase</keyword>
<keyword id="KW-0822">Tryptophan biosynthesis</keyword>
<comment type="catalytic activity">
    <reaction evidence="1">
        <text>1-(2-carboxyphenylamino)-1-deoxy-D-ribulose 5-phosphate + H(+) = (1S,2R)-1-C-(indol-3-yl)glycerol 3-phosphate + CO2 + H2O</text>
        <dbReference type="Rhea" id="RHEA:23476"/>
        <dbReference type="ChEBI" id="CHEBI:15377"/>
        <dbReference type="ChEBI" id="CHEBI:15378"/>
        <dbReference type="ChEBI" id="CHEBI:16526"/>
        <dbReference type="ChEBI" id="CHEBI:58613"/>
        <dbReference type="ChEBI" id="CHEBI:58866"/>
        <dbReference type="EC" id="4.1.1.48"/>
    </reaction>
</comment>
<comment type="pathway">
    <text evidence="1">Amino-acid biosynthesis; L-tryptophan biosynthesis; L-tryptophan from chorismate: step 4/5.</text>
</comment>
<comment type="similarity">
    <text evidence="1">Belongs to the TrpC family.</text>
</comment>